<gene>
    <name evidence="1" type="primary">cmoB</name>
    <name type="ordered locus">SO_2436</name>
</gene>
<sequence length="330" mass="37834">MINFSSFYQQIADSNLQHWLETLPAILGKWQREHKHGNLPKWEKVLNKLHYPSPDSVDLVDSVTIGTGEQLTPGEKEKLENLLRLFMPWRKGPFHIHGIHIDTEWRSDWKWDRVKPHISPLQNRTVLDVGCGSGYHMWRMLGAGAKRVVGIDPSPLFLCQFEAVKRLSGENHPVHLLPLGIEELPPLDAFDTVFSMGVLYHRRSPIDHLLQLRDQLRMGGELVLETLVIDGDENAVLVPQDRYGKMNNVWFIPSVAALMLWLKKCDFTDIRCVDTDVTALAEQRRTDWMPNESLVEYLDPKDITKTVEGYPAPKRATIIAVKNQPNQDLS</sequence>
<name>CMOB_SHEON</name>
<keyword id="KW-1185">Reference proteome</keyword>
<keyword id="KW-0808">Transferase</keyword>
<keyword id="KW-0819">tRNA processing</keyword>
<accession>Q8EEE6</accession>
<dbReference type="EC" id="2.5.1.-" evidence="1"/>
<dbReference type="EMBL" id="AE014299">
    <property type="protein sequence ID" value="AAN55470.1"/>
    <property type="molecule type" value="Genomic_DNA"/>
</dbReference>
<dbReference type="RefSeq" id="NP_718026.1">
    <property type="nucleotide sequence ID" value="NC_004347.2"/>
</dbReference>
<dbReference type="RefSeq" id="WP_011072411.1">
    <property type="nucleotide sequence ID" value="NC_004347.2"/>
</dbReference>
<dbReference type="SMR" id="Q8EEE6"/>
<dbReference type="STRING" id="211586.SO_2436"/>
<dbReference type="PaxDb" id="211586-SO_2436"/>
<dbReference type="KEGG" id="son:SO_2436"/>
<dbReference type="PATRIC" id="fig|211586.12.peg.2343"/>
<dbReference type="eggNOG" id="COG0500">
    <property type="taxonomic scope" value="Bacteria"/>
</dbReference>
<dbReference type="HOGENOM" id="CLU_052665_0_0_6"/>
<dbReference type="OrthoDB" id="9773188at2"/>
<dbReference type="PhylomeDB" id="Q8EEE6"/>
<dbReference type="BioCyc" id="SONE211586:G1GMP-2226-MONOMER"/>
<dbReference type="Proteomes" id="UP000008186">
    <property type="component" value="Chromosome"/>
</dbReference>
<dbReference type="GO" id="GO:0008168">
    <property type="term" value="F:methyltransferase activity"/>
    <property type="evidence" value="ECO:0000318"/>
    <property type="project" value="GO_Central"/>
</dbReference>
<dbReference type="GO" id="GO:0016765">
    <property type="term" value="F:transferase activity, transferring alkyl or aryl (other than methyl) groups"/>
    <property type="evidence" value="ECO:0007669"/>
    <property type="project" value="UniProtKB-UniRule"/>
</dbReference>
<dbReference type="GO" id="GO:0002098">
    <property type="term" value="P:tRNA wobble uridine modification"/>
    <property type="evidence" value="ECO:0007669"/>
    <property type="project" value="InterPro"/>
</dbReference>
<dbReference type="CDD" id="cd02440">
    <property type="entry name" value="AdoMet_MTases"/>
    <property type="match status" value="1"/>
</dbReference>
<dbReference type="Gene3D" id="3.40.50.150">
    <property type="entry name" value="Vaccinia Virus protein VP39"/>
    <property type="match status" value="1"/>
</dbReference>
<dbReference type="HAMAP" id="MF_01590">
    <property type="entry name" value="tRNA_carboxymethyltr_CmoB"/>
    <property type="match status" value="1"/>
</dbReference>
<dbReference type="InterPro" id="IPR010017">
    <property type="entry name" value="CmoB"/>
</dbReference>
<dbReference type="InterPro" id="IPR027555">
    <property type="entry name" value="Mo5U34_MeTrfas-like"/>
</dbReference>
<dbReference type="InterPro" id="IPR029063">
    <property type="entry name" value="SAM-dependent_MTases_sf"/>
</dbReference>
<dbReference type="NCBIfam" id="NF011650">
    <property type="entry name" value="PRK15068.1"/>
    <property type="match status" value="1"/>
</dbReference>
<dbReference type="NCBIfam" id="TIGR00452">
    <property type="entry name" value="tRNA 5-methoxyuridine(34)/uridine 5-oxyacetic acid(34) synthase CmoB"/>
    <property type="match status" value="1"/>
</dbReference>
<dbReference type="PANTHER" id="PTHR43464">
    <property type="entry name" value="METHYLTRANSFERASE"/>
    <property type="match status" value="1"/>
</dbReference>
<dbReference type="PANTHER" id="PTHR43464:SF95">
    <property type="entry name" value="TRNA U34 CARBOXYMETHYLTRANSFERASE"/>
    <property type="match status" value="1"/>
</dbReference>
<dbReference type="Pfam" id="PF08003">
    <property type="entry name" value="Methyltransf_9"/>
    <property type="match status" value="1"/>
</dbReference>
<dbReference type="SUPFAM" id="SSF53335">
    <property type="entry name" value="S-adenosyl-L-methionine-dependent methyltransferases"/>
    <property type="match status" value="1"/>
</dbReference>
<organism>
    <name type="scientific">Shewanella oneidensis (strain ATCC 700550 / JCM 31522 / CIP 106686 / LMG 19005 / NCIMB 14063 / MR-1)</name>
    <dbReference type="NCBI Taxonomy" id="211586"/>
    <lineage>
        <taxon>Bacteria</taxon>
        <taxon>Pseudomonadati</taxon>
        <taxon>Pseudomonadota</taxon>
        <taxon>Gammaproteobacteria</taxon>
        <taxon>Alteromonadales</taxon>
        <taxon>Shewanellaceae</taxon>
        <taxon>Shewanella</taxon>
    </lineage>
</organism>
<reference key="1">
    <citation type="journal article" date="2002" name="Nat. Biotechnol.">
        <title>Genome sequence of the dissimilatory metal ion-reducing bacterium Shewanella oneidensis.</title>
        <authorList>
            <person name="Heidelberg J.F."/>
            <person name="Paulsen I.T."/>
            <person name="Nelson K.E."/>
            <person name="Gaidos E.J."/>
            <person name="Nelson W.C."/>
            <person name="Read T.D."/>
            <person name="Eisen J.A."/>
            <person name="Seshadri R."/>
            <person name="Ward N.L."/>
            <person name="Methe B.A."/>
            <person name="Clayton R.A."/>
            <person name="Meyer T."/>
            <person name="Tsapin A."/>
            <person name="Scott J."/>
            <person name="Beanan M.J."/>
            <person name="Brinkac L.M."/>
            <person name="Daugherty S.C."/>
            <person name="DeBoy R.T."/>
            <person name="Dodson R.J."/>
            <person name="Durkin A.S."/>
            <person name="Haft D.H."/>
            <person name="Kolonay J.F."/>
            <person name="Madupu R."/>
            <person name="Peterson J.D."/>
            <person name="Umayam L.A."/>
            <person name="White O."/>
            <person name="Wolf A.M."/>
            <person name="Vamathevan J.J."/>
            <person name="Weidman J.F."/>
            <person name="Impraim M."/>
            <person name="Lee K."/>
            <person name="Berry K.J."/>
            <person name="Lee C."/>
            <person name="Mueller J."/>
            <person name="Khouri H.M."/>
            <person name="Gill J."/>
            <person name="Utterback T.R."/>
            <person name="McDonald L.A."/>
            <person name="Feldblyum T.V."/>
            <person name="Smith H.O."/>
            <person name="Venter J.C."/>
            <person name="Nealson K.H."/>
            <person name="Fraser C.M."/>
        </authorList>
    </citation>
    <scope>NUCLEOTIDE SEQUENCE [LARGE SCALE GENOMIC DNA]</scope>
    <source>
        <strain>ATCC 700550 / JCM 31522 / CIP 106686 / LMG 19005 / NCIMB 14063 / MR-1</strain>
    </source>
</reference>
<protein>
    <recommendedName>
        <fullName evidence="1">tRNA U34 carboxymethyltransferase</fullName>
        <ecNumber evidence="1">2.5.1.-</ecNumber>
    </recommendedName>
</protein>
<feature type="chain" id="PRO_0000313969" description="tRNA U34 carboxymethyltransferase">
    <location>
        <begin position="1"/>
        <end position="330"/>
    </location>
</feature>
<feature type="binding site" evidence="1">
    <location>
        <position position="91"/>
    </location>
    <ligand>
        <name>carboxy-S-adenosyl-L-methionine</name>
        <dbReference type="ChEBI" id="CHEBI:134278"/>
    </ligand>
</feature>
<feature type="binding site" evidence="1">
    <location>
        <position position="105"/>
    </location>
    <ligand>
        <name>carboxy-S-adenosyl-L-methionine</name>
        <dbReference type="ChEBI" id="CHEBI:134278"/>
    </ligand>
</feature>
<feature type="binding site" evidence="1">
    <location>
        <position position="110"/>
    </location>
    <ligand>
        <name>carboxy-S-adenosyl-L-methionine</name>
        <dbReference type="ChEBI" id="CHEBI:134278"/>
    </ligand>
</feature>
<feature type="binding site" evidence="1">
    <location>
        <position position="130"/>
    </location>
    <ligand>
        <name>carboxy-S-adenosyl-L-methionine</name>
        <dbReference type="ChEBI" id="CHEBI:134278"/>
    </ligand>
</feature>
<feature type="binding site" evidence="1">
    <location>
        <begin position="152"/>
        <end position="154"/>
    </location>
    <ligand>
        <name>carboxy-S-adenosyl-L-methionine</name>
        <dbReference type="ChEBI" id="CHEBI:134278"/>
    </ligand>
</feature>
<feature type="binding site" evidence="1">
    <location>
        <begin position="181"/>
        <end position="182"/>
    </location>
    <ligand>
        <name>carboxy-S-adenosyl-L-methionine</name>
        <dbReference type="ChEBI" id="CHEBI:134278"/>
    </ligand>
</feature>
<feature type="binding site" evidence="1">
    <location>
        <position position="196"/>
    </location>
    <ligand>
        <name>carboxy-S-adenosyl-L-methionine</name>
        <dbReference type="ChEBI" id="CHEBI:134278"/>
    </ligand>
</feature>
<feature type="binding site" evidence="1">
    <location>
        <position position="200"/>
    </location>
    <ligand>
        <name>carboxy-S-adenosyl-L-methionine</name>
        <dbReference type="ChEBI" id="CHEBI:134278"/>
    </ligand>
</feature>
<feature type="binding site" evidence="1">
    <location>
        <position position="315"/>
    </location>
    <ligand>
        <name>carboxy-S-adenosyl-L-methionine</name>
        <dbReference type="ChEBI" id="CHEBI:134278"/>
    </ligand>
</feature>
<comment type="function">
    <text evidence="1">Catalyzes carboxymethyl transfer from carboxy-S-adenosyl-L-methionine (Cx-SAM) to 5-hydroxyuridine (ho5U) to form 5-carboxymethoxyuridine (cmo5U) at position 34 in tRNAs.</text>
</comment>
<comment type="catalytic activity">
    <reaction evidence="1">
        <text>carboxy-S-adenosyl-L-methionine + 5-hydroxyuridine(34) in tRNA = 5-carboxymethoxyuridine(34) in tRNA + S-adenosyl-L-homocysteine + H(+)</text>
        <dbReference type="Rhea" id="RHEA:52848"/>
        <dbReference type="Rhea" id="RHEA-COMP:13381"/>
        <dbReference type="Rhea" id="RHEA-COMP:13383"/>
        <dbReference type="ChEBI" id="CHEBI:15378"/>
        <dbReference type="ChEBI" id="CHEBI:57856"/>
        <dbReference type="ChEBI" id="CHEBI:134278"/>
        <dbReference type="ChEBI" id="CHEBI:136877"/>
        <dbReference type="ChEBI" id="CHEBI:136879"/>
    </reaction>
</comment>
<comment type="subunit">
    <text evidence="1">Homotetramer.</text>
</comment>
<comment type="similarity">
    <text evidence="1">Belongs to the class I-like SAM-binding methyltransferase superfamily. CmoB family.</text>
</comment>
<evidence type="ECO:0000255" key="1">
    <source>
        <dbReference type="HAMAP-Rule" id="MF_01590"/>
    </source>
</evidence>
<proteinExistence type="inferred from homology"/>